<evidence type="ECO:0000255" key="1">
    <source>
        <dbReference type="HAMAP-Rule" id="MF_00451"/>
    </source>
</evidence>
<gene>
    <name evidence="1" type="primary">ndk</name>
    <name type="ordered locus">SPO2444</name>
</gene>
<protein>
    <recommendedName>
        <fullName evidence="1">Nucleoside diphosphate kinase</fullName>
        <shortName evidence="1">NDK</shortName>
        <shortName evidence="1">NDP kinase</shortName>
        <ecNumber evidence="1">2.7.4.6</ecNumber>
    </recommendedName>
    <alternativeName>
        <fullName evidence="1">Nucleoside-2-P kinase</fullName>
    </alternativeName>
</protein>
<accession>Q5LQP4</accession>
<proteinExistence type="inferred from homology"/>
<feature type="chain" id="PRO_0000137043" description="Nucleoside diphosphate kinase">
    <location>
        <begin position="1"/>
        <end position="140"/>
    </location>
</feature>
<feature type="active site" description="Pros-phosphohistidine intermediate" evidence="1">
    <location>
        <position position="117"/>
    </location>
</feature>
<feature type="binding site" evidence="1">
    <location>
        <position position="11"/>
    </location>
    <ligand>
        <name>ATP</name>
        <dbReference type="ChEBI" id="CHEBI:30616"/>
    </ligand>
</feature>
<feature type="binding site" evidence="1">
    <location>
        <position position="59"/>
    </location>
    <ligand>
        <name>ATP</name>
        <dbReference type="ChEBI" id="CHEBI:30616"/>
    </ligand>
</feature>
<feature type="binding site" evidence="1">
    <location>
        <position position="87"/>
    </location>
    <ligand>
        <name>ATP</name>
        <dbReference type="ChEBI" id="CHEBI:30616"/>
    </ligand>
</feature>
<feature type="binding site" evidence="1">
    <location>
        <position position="93"/>
    </location>
    <ligand>
        <name>ATP</name>
        <dbReference type="ChEBI" id="CHEBI:30616"/>
    </ligand>
</feature>
<feature type="binding site" evidence="1">
    <location>
        <position position="104"/>
    </location>
    <ligand>
        <name>ATP</name>
        <dbReference type="ChEBI" id="CHEBI:30616"/>
    </ligand>
</feature>
<feature type="binding site" evidence="1">
    <location>
        <position position="114"/>
    </location>
    <ligand>
        <name>ATP</name>
        <dbReference type="ChEBI" id="CHEBI:30616"/>
    </ligand>
</feature>
<dbReference type="EC" id="2.7.4.6" evidence="1"/>
<dbReference type="EMBL" id="CP000031">
    <property type="protein sequence ID" value="AAV95698.1"/>
    <property type="molecule type" value="Genomic_DNA"/>
</dbReference>
<dbReference type="RefSeq" id="WP_011048153.1">
    <property type="nucleotide sequence ID" value="NC_003911.12"/>
</dbReference>
<dbReference type="SMR" id="Q5LQP4"/>
<dbReference type="STRING" id="246200.SPO2444"/>
<dbReference type="PaxDb" id="246200-SPO2444"/>
<dbReference type="KEGG" id="sil:SPO2444"/>
<dbReference type="eggNOG" id="COG0105">
    <property type="taxonomic scope" value="Bacteria"/>
</dbReference>
<dbReference type="HOGENOM" id="CLU_060216_8_1_5"/>
<dbReference type="OrthoDB" id="9801161at2"/>
<dbReference type="Proteomes" id="UP000001023">
    <property type="component" value="Chromosome"/>
</dbReference>
<dbReference type="GO" id="GO:0005737">
    <property type="term" value="C:cytoplasm"/>
    <property type="evidence" value="ECO:0007669"/>
    <property type="project" value="UniProtKB-SubCell"/>
</dbReference>
<dbReference type="GO" id="GO:0005524">
    <property type="term" value="F:ATP binding"/>
    <property type="evidence" value="ECO:0007669"/>
    <property type="project" value="UniProtKB-UniRule"/>
</dbReference>
<dbReference type="GO" id="GO:0046872">
    <property type="term" value="F:metal ion binding"/>
    <property type="evidence" value="ECO:0007669"/>
    <property type="project" value="UniProtKB-KW"/>
</dbReference>
<dbReference type="GO" id="GO:0004550">
    <property type="term" value="F:nucleoside diphosphate kinase activity"/>
    <property type="evidence" value="ECO:0007669"/>
    <property type="project" value="UniProtKB-UniRule"/>
</dbReference>
<dbReference type="GO" id="GO:0006241">
    <property type="term" value="P:CTP biosynthetic process"/>
    <property type="evidence" value="ECO:0007669"/>
    <property type="project" value="UniProtKB-UniRule"/>
</dbReference>
<dbReference type="GO" id="GO:0006183">
    <property type="term" value="P:GTP biosynthetic process"/>
    <property type="evidence" value="ECO:0007669"/>
    <property type="project" value="UniProtKB-UniRule"/>
</dbReference>
<dbReference type="GO" id="GO:0006228">
    <property type="term" value="P:UTP biosynthetic process"/>
    <property type="evidence" value="ECO:0007669"/>
    <property type="project" value="UniProtKB-UniRule"/>
</dbReference>
<dbReference type="CDD" id="cd04413">
    <property type="entry name" value="NDPk_I"/>
    <property type="match status" value="1"/>
</dbReference>
<dbReference type="FunFam" id="3.30.70.141:FF:000001">
    <property type="entry name" value="Nucleoside diphosphate kinase"/>
    <property type="match status" value="1"/>
</dbReference>
<dbReference type="Gene3D" id="3.30.70.141">
    <property type="entry name" value="Nucleoside diphosphate kinase-like domain"/>
    <property type="match status" value="1"/>
</dbReference>
<dbReference type="HAMAP" id="MF_00451">
    <property type="entry name" value="NDP_kinase"/>
    <property type="match status" value="1"/>
</dbReference>
<dbReference type="InterPro" id="IPR034907">
    <property type="entry name" value="NDK-like_dom"/>
</dbReference>
<dbReference type="InterPro" id="IPR036850">
    <property type="entry name" value="NDK-like_dom_sf"/>
</dbReference>
<dbReference type="InterPro" id="IPR001564">
    <property type="entry name" value="Nucleoside_diP_kinase"/>
</dbReference>
<dbReference type="InterPro" id="IPR023005">
    <property type="entry name" value="Nucleoside_diP_kinase_AS"/>
</dbReference>
<dbReference type="NCBIfam" id="NF001908">
    <property type="entry name" value="PRK00668.1"/>
    <property type="match status" value="1"/>
</dbReference>
<dbReference type="PANTHER" id="PTHR46161">
    <property type="entry name" value="NUCLEOSIDE DIPHOSPHATE KINASE"/>
    <property type="match status" value="1"/>
</dbReference>
<dbReference type="PANTHER" id="PTHR46161:SF3">
    <property type="entry name" value="NUCLEOSIDE DIPHOSPHATE KINASE DDB_G0292928-RELATED"/>
    <property type="match status" value="1"/>
</dbReference>
<dbReference type="Pfam" id="PF00334">
    <property type="entry name" value="NDK"/>
    <property type="match status" value="1"/>
</dbReference>
<dbReference type="PRINTS" id="PR01243">
    <property type="entry name" value="NUCDPKINASE"/>
</dbReference>
<dbReference type="SMART" id="SM00562">
    <property type="entry name" value="NDK"/>
    <property type="match status" value="1"/>
</dbReference>
<dbReference type="SUPFAM" id="SSF54919">
    <property type="entry name" value="Nucleoside diphosphate kinase, NDK"/>
    <property type="match status" value="1"/>
</dbReference>
<dbReference type="PROSITE" id="PS00469">
    <property type="entry name" value="NDPK"/>
    <property type="match status" value="1"/>
</dbReference>
<dbReference type="PROSITE" id="PS51374">
    <property type="entry name" value="NDPK_LIKE"/>
    <property type="match status" value="1"/>
</dbReference>
<keyword id="KW-0067">ATP-binding</keyword>
<keyword id="KW-0963">Cytoplasm</keyword>
<keyword id="KW-0418">Kinase</keyword>
<keyword id="KW-0460">Magnesium</keyword>
<keyword id="KW-0479">Metal-binding</keyword>
<keyword id="KW-0546">Nucleotide metabolism</keyword>
<keyword id="KW-0547">Nucleotide-binding</keyword>
<keyword id="KW-0597">Phosphoprotein</keyword>
<keyword id="KW-1185">Reference proteome</keyword>
<keyword id="KW-0808">Transferase</keyword>
<sequence length="140" mass="15174">MALERTFSIIKPDATRRNLTGKINAKFEEAGLRIVAQKRIHMTKEQAGVFYGVHAERPFYDELCEFMSSAPVVVQVLEGENAIAKNREVMGATNPADAAPGTIRAEFAESVGENSVHGSDAPETAAVEIAYFFSGIELVG</sequence>
<organism>
    <name type="scientific">Ruegeria pomeroyi (strain ATCC 700808 / DSM 15171 / DSS-3)</name>
    <name type="common">Silicibacter pomeroyi</name>
    <dbReference type="NCBI Taxonomy" id="246200"/>
    <lineage>
        <taxon>Bacteria</taxon>
        <taxon>Pseudomonadati</taxon>
        <taxon>Pseudomonadota</taxon>
        <taxon>Alphaproteobacteria</taxon>
        <taxon>Rhodobacterales</taxon>
        <taxon>Roseobacteraceae</taxon>
        <taxon>Ruegeria</taxon>
    </lineage>
</organism>
<comment type="function">
    <text evidence="1">Major role in the synthesis of nucleoside triphosphates other than ATP. The ATP gamma phosphate is transferred to the NDP beta phosphate via a ping-pong mechanism, using a phosphorylated active-site intermediate.</text>
</comment>
<comment type="catalytic activity">
    <reaction evidence="1">
        <text>a 2'-deoxyribonucleoside 5'-diphosphate + ATP = a 2'-deoxyribonucleoside 5'-triphosphate + ADP</text>
        <dbReference type="Rhea" id="RHEA:44640"/>
        <dbReference type="ChEBI" id="CHEBI:30616"/>
        <dbReference type="ChEBI" id="CHEBI:61560"/>
        <dbReference type="ChEBI" id="CHEBI:73316"/>
        <dbReference type="ChEBI" id="CHEBI:456216"/>
        <dbReference type="EC" id="2.7.4.6"/>
    </reaction>
</comment>
<comment type="catalytic activity">
    <reaction evidence="1">
        <text>a ribonucleoside 5'-diphosphate + ATP = a ribonucleoside 5'-triphosphate + ADP</text>
        <dbReference type="Rhea" id="RHEA:18113"/>
        <dbReference type="ChEBI" id="CHEBI:30616"/>
        <dbReference type="ChEBI" id="CHEBI:57930"/>
        <dbReference type="ChEBI" id="CHEBI:61557"/>
        <dbReference type="ChEBI" id="CHEBI:456216"/>
        <dbReference type="EC" id="2.7.4.6"/>
    </reaction>
</comment>
<comment type="cofactor">
    <cofactor evidence="1">
        <name>Mg(2+)</name>
        <dbReference type="ChEBI" id="CHEBI:18420"/>
    </cofactor>
</comment>
<comment type="subunit">
    <text evidence="1">Homotetramer.</text>
</comment>
<comment type="subcellular location">
    <subcellularLocation>
        <location evidence="1">Cytoplasm</location>
    </subcellularLocation>
</comment>
<comment type="similarity">
    <text evidence="1">Belongs to the NDK family.</text>
</comment>
<reference key="1">
    <citation type="journal article" date="2004" name="Nature">
        <title>Genome sequence of Silicibacter pomeroyi reveals adaptations to the marine environment.</title>
        <authorList>
            <person name="Moran M.A."/>
            <person name="Buchan A."/>
            <person name="Gonzalez J.M."/>
            <person name="Heidelberg J.F."/>
            <person name="Whitman W.B."/>
            <person name="Kiene R.P."/>
            <person name="Henriksen J.R."/>
            <person name="King G.M."/>
            <person name="Belas R."/>
            <person name="Fuqua C."/>
            <person name="Brinkac L.M."/>
            <person name="Lewis M."/>
            <person name="Johri S."/>
            <person name="Weaver B."/>
            <person name="Pai G."/>
            <person name="Eisen J.A."/>
            <person name="Rahe E."/>
            <person name="Sheldon W.M."/>
            <person name="Ye W."/>
            <person name="Miller T.R."/>
            <person name="Carlton J."/>
            <person name="Rasko D.A."/>
            <person name="Paulsen I.T."/>
            <person name="Ren Q."/>
            <person name="Daugherty S.C."/>
            <person name="DeBoy R.T."/>
            <person name="Dodson R.J."/>
            <person name="Durkin A.S."/>
            <person name="Madupu R."/>
            <person name="Nelson W.C."/>
            <person name="Sullivan S.A."/>
            <person name="Rosovitz M.J."/>
            <person name="Haft D.H."/>
            <person name="Selengut J."/>
            <person name="Ward N."/>
        </authorList>
    </citation>
    <scope>NUCLEOTIDE SEQUENCE [LARGE SCALE GENOMIC DNA]</scope>
    <source>
        <strain>ATCC 700808 / DSM 15171 / DSS-3</strain>
    </source>
</reference>
<reference key="2">
    <citation type="journal article" date="2014" name="Stand. Genomic Sci.">
        <title>An updated genome annotation for the model marine bacterium Ruegeria pomeroyi DSS-3.</title>
        <authorList>
            <person name="Rivers A.R."/>
            <person name="Smith C.B."/>
            <person name="Moran M.A."/>
        </authorList>
    </citation>
    <scope>GENOME REANNOTATION</scope>
    <source>
        <strain>ATCC 700808 / DSM 15171 / DSS-3</strain>
    </source>
</reference>
<name>NDK_RUEPO</name>